<gene>
    <name evidence="1" type="primary">ileS</name>
    <name type="ordered locus">Spea_1083</name>
</gene>
<feature type="chain" id="PRO_1000088555" description="Isoleucine--tRNA ligase">
    <location>
        <begin position="1"/>
        <end position="940"/>
    </location>
</feature>
<feature type="short sequence motif" description="'HIGH' region">
    <location>
        <begin position="58"/>
        <end position="68"/>
    </location>
</feature>
<feature type="short sequence motif" description="'KMSKS' region">
    <location>
        <begin position="605"/>
        <end position="609"/>
    </location>
</feature>
<feature type="binding site" evidence="1">
    <location>
        <position position="564"/>
    </location>
    <ligand>
        <name>L-isoleucyl-5'-AMP</name>
        <dbReference type="ChEBI" id="CHEBI:178002"/>
    </ligand>
</feature>
<feature type="binding site" evidence="1">
    <location>
        <position position="608"/>
    </location>
    <ligand>
        <name>ATP</name>
        <dbReference type="ChEBI" id="CHEBI:30616"/>
    </ligand>
</feature>
<feature type="binding site" evidence="1">
    <location>
        <position position="903"/>
    </location>
    <ligand>
        <name>Zn(2+)</name>
        <dbReference type="ChEBI" id="CHEBI:29105"/>
    </ligand>
</feature>
<feature type="binding site" evidence="1">
    <location>
        <position position="906"/>
    </location>
    <ligand>
        <name>Zn(2+)</name>
        <dbReference type="ChEBI" id="CHEBI:29105"/>
    </ligand>
</feature>
<feature type="binding site" evidence="1">
    <location>
        <position position="923"/>
    </location>
    <ligand>
        <name>Zn(2+)</name>
        <dbReference type="ChEBI" id="CHEBI:29105"/>
    </ligand>
</feature>
<feature type="binding site" evidence="1">
    <location>
        <position position="926"/>
    </location>
    <ligand>
        <name>Zn(2+)</name>
        <dbReference type="ChEBI" id="CHEBI:29105"/>
    </ligand>
</feature>
<organism>
    <name type="scientific">Shewanella pealeana (strain ATCC 700345 / ANG-SQ1)</name>
    <dbReference type="NCBI Taxonomy" id="398579"/>
    <lineage>
        <taxon>Bacteria</taxon>
        <taxon>Pseudomonadati</taxon>
        <taxon>Pseudomonadota</taxon>
        <taxon>Gammaproteobacteria</taxon>
        <taxon>Alteromonadales</taxon>
        <taxon>Shewanellaceae</taxon>
        <taxon>Shewanella</taxon>
    </lineage>
</organism>
<reference key="1">
    <citation type="submission" date="2007-10" db="EMBL/GenBank/DDBJ databases">
        <title>Complete sequence of Shewanella pealeana ATCC 700345.</title>
        <authorList>
            <consortium name="US DOE Joint Genome Institute"/>
            <person name="Copeland A."/>
            <person name="Lucas S."/>
            <person name="Lapidus A."/>
            <person name="Barry K."/>
            <person name="Glavina del Rio T."/>
            <person name="Dalin E."/>
            <person name="Tice H."/>
            <person name="Pitluck S."/>
            <person name="Chertkov O."/>
            <person name="Brettin T."/>
            <person name="Bruce D."/>
            <person name="Detter J.C."/>
            <person name="Han C."/>
            <person name="Schmutz J."/>
            <person name="Larimer F."/>
            <person name="Land M."/>
            <person name="Hauser L."/>
            <person name="Kyrpides N."/>
            <person name="Kim E."/>
            <person name="Zhao J.-S.Z."/>
            <person name="Manno D."/>
            <person name="Hawari J."/>
            <person name="Richardson P."/>
        </authorList>
    </citation>
    <scope>NUCLEOTIDE SEQUENCE [LARGE SCALE GENOMIC DNA]</scope>
    <source>
        <strain>ATCC 700345 / ANG-SQ1</strain>
    </source>
</reference>
<comment type="function">
    <text evidence="1">Catalyzes the attachment of isoleucine to tRNA(Ile). As IleRS can inadvertently accommodate and process structurally similar amino acids such as valine, to avoid such errors it has two additional distinct tRNA(Ile)-dependent editing activities. One activity is designated as 'pretransfer' editing and involves the hydrolysis of activated Val-AMP. The other activity is designated 'posttransfer' editing and involves deacylation of mischarged Val-tRNA(Ile).</text>
</comment>
<comment type="catalytic activity">
    <reaction evidence="1">
        <text>tRNA(Ile) + L-isoleucine + ATP = L-isoleucyl-tRNA(Ile) + AMP + diphosphate</text>
        <dbReference type="Rhea" id="RHEA:11060"/>
        <dbReference type="Rhea" id="RHEA-COMP:9666"/>
        <dbReference type="Rhea" id="RHEA-COMP:9695"/>
        <dbReference type="ChEBI" id="CHEBI:30616"/>
        <dbReference type="ChEBI" id="CHEBI:33019"/>
        <dbReference type="ChEBI" id="CHEBI:58045"/>
        <dbReference type="ChEBI" id="CHEBI:78442"/>
        <dbReference type="ChEBI" id="CHEBI:78528"/>
        <dbReference type="ChEBI" id="CHEBI:456215"/>
        <dbReference type="EC" id="6.1.1.5"/>
    </reaction>
</comment>
<comment type="cofactor">
    <cofactor evidence="1">
        <name>Zn(2+)</name>
        <dbReference type="ChEBI" id="CHEBI:29105"/>
    </cofactor>
    <text evidence="1">Binds 1 zinc ion per subunit.</text>
</comment>
<comment type="subunit">
    <text evidence="1">Monomer.</text>
</comment>
<comment type="subcellular location">
    <subcellularLocation>
        <location evidence="1">Cytoplasm</location>
    </subcellularLocation>
</comment>
<comment type="domain">
    <text evidence="1">IleRS has two distinct active sites: one for aminoacylation and one for editing. The misactivated valine is translocated from the active site to the editing site, which sterically excludes the correctly activated isoleucine. The single editing site contains two valyl binding pockets, one specific for each substrate (Val-AMP or Val-tRNA(Ile)).</text>
</comment>
<comment type="similarity">
    <text evidence="1">Belongs to the class-I aminoacyl-tRNA synthetase family. IleS type 1 subfamily.</text>
</comment>
<protein>
    <recommendedName>
        <fullName evidence="1">Isoleucine--tRNA ligase</fullName>
        <ecNumber evidence="1">6.1.1.5</ecNumber>
    </recommendedName>
    <alternativeName>
        <fullName evidence="1">Isoleucyl-tRNA synthetase</fullName>
        <shortName evidence="1">IleRS</shortName>
    </alternativeName>
</protein>
<dbReference type="EC" id="6.1.1.5" evidence="1"/>
<dbReference type="EMBL" id="CP000851">
    <property type="protein sequence ID" value="ABV86410.1"/>
    <property type="molecule type" value="Genomic_DNA"/>
</dbReference>
<dbReference type="RefSeq" id="WP_012154341.1">
    <property type="nucleotide sequence ID" value="NC_009901.1"/>
</dbReference>
<dbReference type="SMR" id="A8H1H3"/>
<dbReference type="STRING" id="398579.Spea_1083"/>
<dbReference type="KEGG" id="spl:Spea_1083"/>
<dbReference type="eggNOG" id="COG0060">
    <property type="taxonomic scope" value="Bacteria"/>
</dbReference>
<dbReference type="HOGENOM" id="CLU_001493_7_1_6"/>
<dbReference type="OrthoDB" id="9810365at2"/>
<dbReference type="Proteomes" id="UP000002608">
    <property type="component" value="Chromosome"/>
</dbReference>
<dbReference type="GO" id="GO:0005829">
    <property type="term" value="C:cytosol"/>
    <property type="evidence" value="ECO:0007669"/>
    <property type="project" value="TreeGrafter"/>
</dbReference>
<dbReference type="GO" id="GO:0002161">
    <property type="term" value="F:aminoacyl-tRNA deacylase activity"/>
    <property type="evidence" value="ECO:0007669"/>
    <property type="project" value="InterPro"/>
</dbReference>
<dbReference type="GO" id="GO:0005524">
    <property type="term" value="F:ATP binding"/>
    <property type="evidence" value="ECO:0007669"/>
    <property type="project" value="UniProtKB-UniRule"/>
</dbReference>
<dbReference type="GO" id="GO:0004822">
    <property type="term" value="F:isoleucine-tRNA ligase activity"/>
    <property type="evidence" value="ECO:0007669"/>
    <property type="project" value="UniProtKB-UniRule"/>
</dbReference>
<dbReference type="GO" id="GO:0000049">
    <property type="term" value="F:tRNA binding"/>
    <property type="evidence" value="ECO:0007669"/>
    <property type="project" value="InterPro"/>
</dbReference>
<dbReference type="GO" id="GO:0008270">
    <property type="term" value="F:zinc ion binding"/>
    <property type="evidence" value="ECO:0007669"/>
    <property type="project" value="UniProtKB-UniRule"/>
</dbReference>
<dbReference type="GO" id="GO:0006428">
    <property type="term" value="P:isoleucyl-tRNA aminoacylation"/>
    <property type="evidence" value="ECO:0007669"/>
    <property type="project" value="UniProtKB-UniRule"/>
</dbReference>
<dbReference type="CDD" id="cd07960">
    <property type="entry name" value="Anticodon_Ia_Ile_BEm"/>
    <property type="match status" value="1"/>
</dbReference>
<dbReference type="CDD" id="cd00818">
    <property type="entry name" value="IleRS_core"/>
    <property type="match status" value="1"/>
</dbReference>
<dbReference type="FunFam" id="1.10.730.20:FF:000001">
    <property type="entry name" value="Isoleucine--tRNA ligase"/>
    <property type="match status" value="1"/>
</dbReference>
<dbReference type="FunFam" id="3.40.50.620:FF:000042">
    <property type="entry name" value="Isoleucine--tRNA ligase"/>
    <property type="match status" value="1"/>
</dbReference>
<dbReference type="FunFam" id="3.40.50.620:FF:000048">
    <property type="entry name" value="Isoleucine--tRNA ligase"/>
    <property type="match status" value="1"/>
</dbReference>
<dbReference type="Gene3D" id="1.10.730.20">
    <property type="match status" value="1"/>
</dbReference>
<dbReference type="Gene3D" id="3.40.50.620">
    <property type="entry name" value="HUPs"/>
    <property type="match status" value="2"/>
</dbReference>
<dbReference type="Gene3D" id="3.90.740.10">
    <property type="entry name" value="Valyl/Leucyl/Isoleucyl-tRNA synthetase, editing domain"/>
    <property type="match status" value="1"/>
</dbReference>
<dbReference type="HAMAP" id="MF_02002">
    <property type="entry name" value="Ile_tRNA_synth_type1"/>
    <property type="match status" value="1"/>
</dbReference>
<dbReference type="InterPro" id="IPR001412">
    <property type="entry name" value="aa-tRNA-synth_I_CS"/>
</dbReference>
<dbReference type="InterPro" id="IPR002300">
    <property type="entry name" value="aa-tRNA-synth_Ia"/>
</dbReference>
<dbReference type="InterPro" id="IPR033708">
    <property type="entry name" value="Anticodon_Ile_BEm"/>
</dbReference>
<dbReference type="InterPro" id="IPR002301">
    <property type="entry name" value="Ile-tRNA-ligase"/>
</dbReference>
<dbReference type="InterPro" id="IPR023585">
    <property type="entry name" value="Ile-tRNA-ligase_type1"/>
</dbReference>
<dbReference type="InterPro" id="IPR050081">
    <property type="entry name" value="Ile-tRNA_ligase"/>
</dbReference>
<dbReference type="InterPro" id="IPR013155">
    <property type="entry name" value="M/V/L/I-tRNA-synth_anticd-bd"/>
</dbReference>
<dbReference type="InterPro" id="IPR014729">
    <property type="entry name" value="Rossmann-like_a/b/a_fold"/>
</dbReference>
<dbReference type="InterPro" id="IPR009080">
    <property type="entry name" value="tRNAsynth_Ia_anticodon-bd"/>
</dbReference>
<dbReference type="InterPro" id="IPR009008">
    <property type="entry name" value="Val/Leu/Ile-tRNA-synth_edit"/>
</dbReference>
<dbReference type="InterPro" id="IPR010663">
    <property type="entry name" value="Znf_FPG/IleRS"/>
</dbReference>
<dbReference type="NCBIfam" id="TIGR00392">
    <property type="entry name" value="ileS"/>
    <property type="match status" value="1"/>
</dbReference>
<dbReference type="PANTHER" id="PTHR42765:SF1">
    <property type="entry name" value="ISOLEUCINE--TRNA LIGASE, MITOCHONDRIAL"/>
    <property type="match status" value="1"/>
</dbReference>
<dbReference type="PANTHER" id="PTHR42765">
    <property type="entry name" value="SOLEUCYL-TRNA SYNTHETASE"/>
    <property type="match status" value="1"/>
</dbReference>
<dbReference type="Pfam" id="PF08264">
    <property type="entry name" value="Anticodon_1"/>
    <property type="match status" value="1"/>
</dbReference>
<dbReference type="Pfam" id="PF00133">
    <property type="entry name" value="tRNA-synt_1"/>
    <property type="match status" value="1"/>
</dbReference>
<dbReference type="Pfam" id="PF06827">
    <property type="entry name" value="zf-FPG_IleRS"/>
    <property type="match status" value="1"/>
</dbReference>
<dbReference type="PRINTS" id="PR00984">
    <property type="entry name" value="TRNASYNTHILE"/>
</dbReference>
<dbReference type="SUPFAM" id="SSF47323">
    <property type="entry name" value="Anticodon-binding domain of a subclass of class I aminoacyl-tRNA synthetases"/>
    <property type="match status" value="1"/>
</dbReference>
<dbReference type="SUPFAM" id="SSF52374">
    <property type="entry name" value="Nucleotidylyl transferase"/>
    <property type="match status" value="1"/>
</dbReference>
<dbReference type="SUPFAM" id="SSF50677">
    <property type="entry name" value="ValRS/IleRS/LeuRS editing domain"/>
    <property type="match status" value="1"/>
</dbReference>
<dbReference type="PROSITE" id="PS00178">
    <property type="entry name" value="AA_TRNA_LIGASE_I"/>
    <property type="match status" value="1"/>
</dbReference>
<proteinExistence type="inferred from homology"/>
<keyword id="KW-0030">Aminoacyl-tRNA synthetase</keyword>
<keyword id="KW-0067">ATP-binding</keyword>
<keyword id="KW-0963">Cytoplasm</keyword>
<keyword id="KW-0436">Ligase</keyword>
<keyword id="KW-0479">Metal-binding</keyword>
<keyword id="KW-0547">Nucleotide-binding</keyword>
<keyword id="KW-0648">Protein biosynthesis</keyword>
<keyword id="KW-1185">Reference proteome</keyword>
<keyword id="KW-0862">Zinc</keyword>
<evidence type="ECO:0000255" key="1">
    <source>
        <dbReference type="HAMAP-Rule" id="MF_02002"/>
    </source>
</evidence>
<name>SYI_SHEPA</name>
<accession>A8H1H3</accession>
<sequence>MSDYKSTLNLPETEFPMRGNLANREPEMLKSWTENGLYQQIRESRKDAKPFILHDGPPYANGDIHIGHSVNKILKDIIIKSKTMSGFDAPYIPGWDCHGLPIELKVEQKVGKPGHKVTAAEFRQKCREYAAKQVDGQRDDFIRLGVFADWQNPYLTMDYSTEANIVRSLSKVIDNGHLHKGVKPVHWCTDCGSALAEAEVEYEDKMSPAIDVAFTVVDKPALLAKFGVNEYPHNISMVIWTTTPWTLPANRALAVGANVEYTLVEMVKEGQAQALVLATDLYESCVERFGAESHTVLGTVAGSDLELLRFNHPFYDFDVPVILGDHVTVDSGTGVVHTAPGHGQDDFVVGQKYGLEVANPVGDNGVYKPDTEIFAGLHVFKANKNVVELLEEKGALLNHVQIKHSYPHCWRHKTPIIFRATPQWFISMDQKGLRQQALGEIEQTQWIPDWGQSRIEKMVENRPDWCISRQRTWGVPITLFVHRETEELHPDSVSLMERVAARIEQEGIQAWWDLDASELLGDEADQYRKVTDTLDVWYDSGSTFSSVVAARPEFNGHPIDLYLEGSDQHRGWFMSSLMISTAMNGKAPYKQVLTHGFTVDGQGRKMSKSVGNVIAPQHVTNKLGADILRLWVAATDYSGEMTVSDQILNRSADAYRRIRNTARFLLANINGFNPETDMVAVEDMVALDRWVVRRAAALQQELLEAYDQYNFHLVTQKLMQFCSVELGSFYLDIIKDRQYTAKEDSNARRSCQSALYLISEAMVRWIAPILSFTADEIWKLLPGERGEYVFTETWYQGLQSVALESDLSDEYWDQLLAVRAEVNKVIENARREKQVGGSLEAEVTLYADEALQAVLENLGDELRFVLLTSKTEVVALAQAPSDAIETELASLKLSLKKSEAEKCERCWHHREDVGAVAEHPTLCTRCVTNIEGEGETRQFA</sequence>